<sequence length="275" mass="29577">MSQQLQSLIEQAWEDRANLSPKAAPNDVRAAVANVIDQLDQGALRVAEKKDGQWIVNQWVKKAVLLSFRLEDNAPMTAGGFTHFYDKVPSKFASYTADDFARGGFRVVPPAVARRGSFIGKNAVLMPSYVNIGAYVDEGTMVDTWATVGSCAQIGKNVHLSGGVGIGGVLEPLQANPVIIEDNCFIGARSEVVEGVIVEENSVISMGVYLGQSTKIYDRETGEVHYGRVPAGSVVVPGNLPSKDGTYSLYCAVIVKKVDAQTRAKTSLNELLRGD</sequence>
<protein>
    <recommendedName>
        <fullName evidence="1">2,3,4,5-tetrahydropyridine-2,6-dicarboxylate N-succinyltransferase</fullName>
        <ecNumber evidence="1">2.3.1.117</ecNumber>
    </recommendedName>
    <alternativeName>
        <fullName evidence="1">Tetrahydrodipicolinate N-succinyltransferase</fullName>
        <shortName evidence="1">THDP succinyltransferase</shortName>
        <shortName evidence="1">THP succinyltransferase</shortName>
        <shortName evidence="1">Tetrahydropicolinate succinylase</shortName>
    </alternativeName>
</protein>
<proteinExistence type="inferred from homology"/>
<evidence type="ECO:0000255" key="1">
    <source>
        <dbReference type="HAMAP-Rule" id="MF_00811"/>
    </source>
</evidence>
<accession>Q8XZK2</accession>
<gene>
    <name evidence="1" type="primary">dapD</name>
    <name type="ordered locus">RSc1393</name>
    <name type="ORF">RS04676</name>
</gene>
<reference key="1">
    <citation type="journal article" date="2002" name="Nature">
        <title>Genome sequence of the plant pathogen Ralstonia solanacearum.</title>
        <authorList>
            <person name="Salanoubat M."/>
            <person name="Genin S."/>
            <person name="Artiguenave F."/>
            <person name="Gouzy J."/>
            <person name="Mangenot S."/>
            <person name="Arlat M."/>
            <person name="Billault A."/>
            <person name="Brottier P."/>
            <person name="Camus J.-C."/>
            <person name="Cattolico L."/>
            <person name="Chandler M."/>
            <person name="Choisne N."/>
            <person name="Claudel-Renard C."/>
            <person name="Cunnac S."/>
            <person name="Demange N."/>
            <person name="Gaspin C."/>
            <person name="Lavie M."/>
            <person name="Moisan A."/>
            <person name="Robert C."/>
            <person name="Saurin W."/>
            <person name="Schiex T."/>
            <person name="Siguier P."/>
            <person name="Thebault P."/>
            <person name="Whalen M."/>
            <person name="Wincker P."/>
            <person name="Levy M."/>
            <person name="Weissenbach J."/>
            <person name="Boucher C.A."/>
        </authorList>
    </citation>
    <scope>NUCLEOTIDE SEQUENCE [LARGE SCALE GENOMIC DNA]</scope>
    <source>
        <strain>ATCC BAA-1114 / GMI1000</strain>
    </source>
</reference>
<dbReference type="EC" id="2.3.1.117" evidence="1"/>
<dbReference type="EMBL" id="AL646052">
    <property type="protein sequence ID" value="CAD15095.1"/>
    <property type="molecule type" value="Genomic_DNA"/>
</dbReference>
<dbReference type="RefSeq" id="WP_011001342.1">
    <property type="nucleotide sequence ID" value="NC_003295.1"/>
</dbReference>
<dbReference type="SMR" id="Q8XZK2"/>
<dbReference type="STRING" id="267608.RSc1393"/>
<dbReference type="EnsemblBacteria" id="CAD15095">
    <property type="protein sequence ID" value="CAD15095"/>
    <property type="gene ID" value="RSc1393"/>
</dbReference>
<dbReference type="KEGG" id="rso:RSc1393"/>
<dbReference type="eggNOG" id="COG2171">
    <property type="taxonomic scope" value="Bacteria"/>
</dbReference>
<dbReference type="HOGENOM" id="CLU_050859_0_1_4"/>
<dbReference type="UniPathway" id="UPA00034">
    <property type="reaction ID" value="UER00019"/>
</dbReference>
<dbReference type="Proteomes" id="UP000001436">
    <property type="component" value="Chromosome"/>
</dbReference>
<dbReference type="GO" id="GO:0005737">
    <property type="term" value="C:cytoplasm"/>
    <property type="evidence" value="ECO:0007669"/>
    <property type="project" value="UniProtKB-SubCell"/>
</dbReference>
<dbReference type="GO" id="GO:0008666">
    <property type="term" value="F:2,3,4,5-tetrahydropyridine-2,6-dicarboxylate N-succinyltransferase activity"/>
    <property type="evidence" value="ECO:0007669"/>
    <property type="project" value="UniProtKB-UniRule"/>
</dbReference>
<dbReference type="GO" id="GO:0016779">
    <property type="term" value="F:nucleotidyltransferase activity"/>
    <property type="evidence" value="ECO:0007669"/>
    <property type="project" value="TreeGrafter"/>
</dbReference>
<dbReference type="GO" id="GO:0019877">
    <property type="term" value="P:diaminopimelate biosynthetic process"/>
    <property type="evidence" value="ECO:0007669"/>
    <property type="project" value="UniProtKB-UniRule"/>
</dbReference>
<dbReference type="GO" id="GO:0009089">
    <property type="term" value="P:lysine biosynthetic process via diaminopimelate"/>
    <property type="evidence" value="ECO:0007669"/>
    <property type="project" value="UniProtKB-UniRule"/>
</dbReference>
<dbReference type="CDD" id="cd03350">
    <property type="entry name" value="LbH_THP_succinylT"/>
    <property type="match status" value="1"/>
</dbReference>
<dbReference type="Gene3D" id="2.160.10.10">
    <property type="entry name" value="Hexapeptide repeat proteins"/>
    <property type="match status" value="1"/>
</dbReference>
<dbReference type="Gene3D" id="1.10.166.10">
    <property type="entry name" value="Tetrahydrodipicolinate-N-succinyltransferase, N-terminal domain"/>
    <property type="match status" value="1"/>
</dbReference>
<dbReference type="HAMAP" id="MF_00811">
    <property type="entry name" value="DapD"/>
    <property type="match status" value="1"/>
</dbReference>
<dbReference type="InterPro" id="IPR005664">
    <property type="entry name" value="DapD_Trfase_Hexpep_rpt_fam"/>
</dbReference>
<dbReference type="InterPro" id="IPR001451">
    <property type="entry name" value="Hexapep"/>
</dbReference>
<dbReference type="InterPro" id="IPR018357">
    <property type="entry name" value="Hexapep_transf_CS"/>
</dbReference>
<dbReference type="InterPro" id="IPR023180">
    <property type="entry name" value="THP_succinylTrfase_dom1"/>
</dbReference>
<dbReference type="InterPro" id="IPR037133">
    <property type="entry name" value="THP_succinylTrfase_N_sf"/>
</dbReference>
<dbReference type="InterPro" id="IPR011004">
    <property type="entry name" value="Trimer_LpxA-like_sf"/>
</dbReference>
<dbReference type="NCBIfam" id="TIGR00965">
    <property type="entry name" value="dapD"/>
    <property type="match status" value="1"/>
</dbReference>
<dbReference type="NCBIfam" id="NF008808">
    <property type="entry name" value="PRK11830.1"/>
    <property type="match status" value="1"/>
</dbReference>
<dbReference type="PANTHER" id="PTHR19136:SF52">
    <property type="entry name" value="2,3,4,5-TETRAHYDROPYRIDINE-2,6-DICARBOXYLATE N-SUCCINYLTRANSFERASE"/>
    <property type="match status" value="1"/>
</dbReference>
<dbReference type="PANTHER" id="PTHR19136">
    <property type="entry name" value="MOLYBDENUM COFACTOR GUANYLYLTRANSFERASE"/>
    <property type="match status" value="1"/>
</dbReference>
<dbReference type="Pfam" id="PF14602">
    <property type="entry name" value="Hexapep_2"/>
    <property type="match status" value="1"/>
</dbReference>
<dbReference type="Pfam" id="PF14805">
    <property type="entry name" value="THDPS_N_2"/>
    <property type="match status" value="1"/>
</dbReference>
<dbReference type="SUPFAM" id="SSF51161">
    <property type="entry name" value="Trimeric LpxA-like enzymes"/>
    <property type="match status" value="1"/>
</dbReference>
<dbReference type="PROSITE" id="PS00101">
    <property type="entry name" value="HEXAPEP_TRANSFERASES"/>
    <property type="match status" value="1"/>
</dbReference>
<comment type="catalytic activity">
    <reaction evidence="1">
        <text>(S)-2,3,4,5-tetrahydrodipicolinate + succinyl-CoA + H2O = (S)-2-succinylamino-6-oxoheptanedioate + CoA</text>
        <dbReference type="Rhea" id="RHEA:17325"/>
        <dbReference type="ChEBI" id="CHEBI:15377"/>
        <dbReference type="ChEBI" id="CHEBI:15685"/>
        <dbReference type="ChEBI" id="CHEBI:16845"/>
        <dbReference type="ChEBI" id="CHEBI:57287"/>
        <dbReference type="ChEBI" id="CHEBI:57292"/>
        <dbReference type="EC" id="2.3.1.117"/>
    </reaction>
</comment>
<comment type="pathway">
    <text evidence="1">Amino-acid biosynthesis; L-lysine biosynthesis via DAP pathway; LL-2,6-diaminopimelate from (S)-tetrahydrodipicolinate (succinylase route): step 1/3.</text>
</comment>
<comment type="subunit">
    <text evidence="1">Homotrimer.</text>
</comment>
<comment type="subcellular location">
    <subcellularLocation>
        <location evidence="1">Cytoplasm</location>
    </subcellularLocation>
</comment>
<comment type="similarity">
    <text evidence="1">Belongs to the transferase hexapeptide repeat family.</text>
</comment>
<organism>
    <name type="scientific">Ralstonia nicotianae (strain ATCC BAA-1114 / GMI1000)</name>
    <name type="common">Ralstonia solanacearum</name>
    <dbReference type="NCBI Taxonomy" id="267608"/>
    <lineage>
        <taxon>Bacteria</taxon>
        <taxon>Pseudomonadati</taxon>
        <taxon>Pseudomonadota</taxon>
        <taxon>Betaproteobacteria</taxon>
        <taxon>Burkholderiales</taxon>
        <taxon>Burkholderiaceae</taxon>
        <taxon>Ralstonia</taxon>
        <taxon>Ralstonia solanacearum species complex</taxon>
    </lineage>
</organism>
<name>DAPD_RALN1</name>
<feature type="chain" id="PRO_0000196958" description="2,3,4,5-tetrahydropyridine-2,6-dicarboxylate N-succinyltransferase">
    <location>
        <begin position="1"/>
        <end position="275"/>
    </location>
</feature>
<feature type="binding site" evidence="1">
    <location>
        <position position="106"/>
    </location>
    <ligand>
        <name>substrate</name>
    </ligand>
</feature>
<feature type="binding site" evidence="1">
    <location>
        <position position="143"/>
    </location>
    <ligand>
        <name>substrate</name>
    </ligand>
</feature>
<keyword id="KW-0012">Acyltransferase</keyword>
<keyword id="KW-0028">Amino-acid biosynthesis</keyword>
<keyword id="KW-0963">Cytoplasm</keyword>
<keyword id="KW-0220">Diaminopimelate biosynthesis</keyword>
<keyword id="KW-0457">Lysine biosynthesis</keyword>
<keyword id="KW-1185">Reference proteome</keyword>
<keyword id="KW-0677">Repeat</keyword>
<keyword id="KW-0808">Transferase</keyword>